<comment type="function">
    <text evidence="10 11 12 14 15 16 18 20 22 24 25">Serine/threonine-protein kinase (PubMed:23666762). Involved in cell polarity and microtubule dynamics regulation. Phosphorylates CRTC2/TORC2, DCX, HDAC7, KIF13B, MAP2, MAP4 and RAB11FIP2. Phosphorylates the microtubule-associated protein MAPT/TAU (PubMed:23666762). Plays a key role in cell polarity by phosphorylating the microtubule-associated proteins MAP2, MAP4 and MAPT/TAU at KXGS motifs, causing detachment from microtubules, and their disassembly. Regulates epithelial cell polarity by phosphorylating RAB11FIP2. Involved in the regulation of neuronal migration through its dual activities in regulating cellular polarity and microtubule dynamics, possibly by phosphorylating and regulating DCX. Regulates axogenesis by phosphorylating KIF13B, promoting interaction between KIF13B and 14-3-3 and inhibiting microtubule-dependent accumulation of KIF13B. Also required for neurite outgrowth and establishment of neuronal polarity. Regulates localization and activity of some histone deacetylases by mediating phosphorylation of HDAC7, promoting subsequent interaction between HDAC7 and 14-3-3 and export from the nucleus. Also acts as a positive regulator of the Wnt signaling pathway, probably by mediating phosphorylation of dishevelled proteins (DVL1, DVL2 and/or DVL3). Modulates the developmental decision to build a columnar versus a hepatic epithelial cell apparently by promoting a switch from a direct to a transcytotic mode of apical protein delivery. Essential for the asymmetric development of membrane domains of polarized epithelial cells.</text>
</comment>
<comment type="catalytic activity">
    <reaction evidence="12">
        <text>L-seryl-[protein] + ATP = O-phospho-L-seryl-[protein] + ADP + H(+)</text>
        <dbReference type="Rhea" id="RHEA:17989"/>
        <dbReference type="Rhea" id="RHEA-COMP:9863"/>
        <dbReference type="Rhea" id="RHEA-COMP:11604"/>
        <dbReference type="ChEBI" id="CHEBI:15378"/>
        <dbReference type="ChEBI" id="CHEBI:29999"/>
        <dbReference type="ChEBI" id="CHEBI:30616"/>
        <dbReference type="ChEBI" id="CHEBI:83421"/>
        <dbReference type="ChEBI" id="CHEBI:456216"/>
        <dbReference type="EC" id="2.7.11.1"/>
    </reaction>
</comment>
<comment type="catalytic activity">
    <reaction evidence="12">
        <text>L-threonyl-[protein] + ATP = O-phospho-L-threonyl-[protein] + ADP + H(+)</text>
        <dbReference type="Rhea" id="RHEA:46608"/>
        <dbReference type="Rhea" id="RHEA-COMP:11060"/>
        <dbReference type="Rhea" id="RHEA-COMP:11605"/>
        <dbReference type="ChEBI" id="CHEBI:15378"/>
        <dbReference type="ChEBI" id="CHEBI:30013"/>
        <dbReference type="ChEBI" id="CHEBI:30616"/>
        <dbReference type="ChEBI" id="CHEBI:61977"/>
        <dbReference type="ChEBI" id="CHEBI:456216"/>
        <dbReference type="EC" id="2.7.11.1"/>
    </reaction>
</comment>
<comment type="catalytic activity">
    <reaction>
        <text>L-seryl-[tau protein] + ATP = O-phospho-L-seryl-[tau protein] + ADP + H(+)</text>
        <dbReference type="Rhea" id="RHEA:12801"/>
        <dbReference type="Rhea" id="RHEA-COMP:13701"/>
        <dbReference type="Rhea" id="RHEA-COMP:13702"/>
        <dbReference type="ChEBI" id="CHEBI:15378"/>
        <dbReference type="ChEBI" id="CHEBI:29999"/>
        <dbReference type="ChEBI" id="CHEBI:30616"/>
        <dbReference type="ChEBI" id="CHEBI:83421"/>
        <dbReference type="ChEBI" id="CHEBI:456216"/>
        <dbReference type="EC" id="2.7.11.26"/>
    </reaction>
</comment>
<comment type="catalytic activity">
    <reaction>
        <text>L-threonyl-[tau protein] + ATP = O-phospho-L-threonyl-[tau protein] + ADP + H(+)</text>
        <dbReference type="Rhea" id="RHEA:53904"/>
        <dbReference type="Rhea" id="RHEA-COMP:13703"/>
        <dbReference type="Rhea" id="RHEA-COMP:13704"/>
        <dbReference type="ChEBI" id="CHEBI:15378"/>
        <dbReference type="ChEBI" id="CHEBI:30013"/>
        <dbReference type="ChEBI" id="CHEBI:30616"/>
        <dbReference type="ChEBI" id="CHEBI:61977"/>
        <dbReference type="ChEBI" id="CHEBI:456216"/>
        <dbReference type="EC" id="2.7.11.26"/>
    </reaction>
</comment>
<comment type="cofactor">
    <cofactor evidence="1">
        <name>Mg(2+)</name>
        <dbReference type="ChEBI" id="CHEBI:18420"/>
    </cofactor>
</comment>
<comment type="activity regulation">
    <text evidence="1 11 12">Inhibited by PAK5; inhibition is independent of the kinase activity of PAK5 (By similarity). Activated by phosphorylation on Thr-208. Inhibited by phosphorylation at Ser-212 and Thr-596. Inhibited by hymenialdisine. Specifically inhibited by the H.pylori CagA peptide FPLKRHDKVDDLSK that mimics host substrates and binds to the kinase substrate-binding site.</text>
</comment>
<comment type="subunit">
    <text evidence="3 15 19 25 26">Homodimer. Interacts with PAK5; leading to inhibit the protein kinase activity (By similarity). Interacts with MAPT/TAU (PubMed:23666762). Interacts with MTCL1 isoform 1; the interaction is direct and increases MARK2 microtubule-binding ability (PubMed:23902687). Interacts (when phosphorylated at Thr-596) with YWHAZ (PubMed:15324659). Interacts with YWHAB, YWHAG and YWHAQ (PubMed:16959763).</text>
</comment>
<comment type="subunit">
    <text evidence="21 23">(Microbial infection) In case of infection, interacts with H.pylori CagA, leading to inhibit kinase activity and junctional and polarity defects.</text>
</comment>
<comment type="interaction">
    <interactant intactId="EBI-516560">
        <id>Q7KZI7</id>
    </interactant>
    <interactant intactId="EBI-295417">
        <id>Q9BYG4</id>
        <label>PARD6G</label>
    </interactant>
    <organismsDiffer>false</organismsDiffer>
    <experiments>2</experiments>
</comment>
<comment type="interaction">
    <interactant intactId="EBI-516560">
        <id>Q7KZI7</id>
    </interactant>
    <interactant intactId="EBI-359815">
        <id>P31946</id>
        <label>YWHAB</label>
    </interactant>
    <organismsDiffer>false</organismsDiffer>
    <experiments>8</experiments>
</comment>
<comment type="interaction">
    <interactant intactId="EBI-516560">
        <id>Q7KZI7</id>
    </interactant>
    <interactant intactId="EBI-359832">
        <id>P61981</id>
        <label>YWHAG</label>
    </interactant>
    <organismsDiffer>false</organismsDiffer>
    <experiments>10</experiments>
</comment>
<comment type="interaction">
    <interactant intactId="EBI-516560">
        <id>Q7KZI7</id>
    </interactant>
    <interactant intactId="EBI-306940">
        <id>Q04917</id>
        <label>YWHAH</label>
    </interactant>
    <organismsDiffer>false</organismsDiffer>
    <experiments>16</experiments>
</comment>
<comment type="interaction">
    <interactant intactId="EBI-516560">
        <id>Q7KZI7</id>
    </interactant>
    <interactant intactId="EBI-347088">
        <id>P63104</id>
        <label>YWHAZ</label>
    </interactant>
    <organismsDiffer>false</organismsDiffer>
    <experiments>12</experiments>
</comment>
<comment type="interaction">
    <interactant intactId="EBI-516560">
        <id>Q7KZI7</id>
    </interactant>
    <interactant intactId="EBI-528104">
        <id>P55980</id>
        <label>cagA</label>
    </interactant>
    <organismsDiffer>true</organismsDiffer>
    <experiments>4</experiments>
</comment>
<comment type="subcellular location">
    <subcellularLocation>
        <location>Cell membrane</location>
        <topology>Peripheral membrane protein</topology>
    </subcellularLocation>
    <subcellularLocation>
        <location>Cytoplasm</location>
    </subcellularLocation>
    <subcellularLocation>
        <location>Lateral cell membrane</location>
    </subcellularLocation>
    <subcellularLocation>
        <location>Cytoplasm</location>
        <location>Cytoskeleton</location>
    </subcellularLocation>
    <subcellularLocation>
        <location evidence="25">Cell projection</location>
        <location evidence="25">Dendrite</location>
    </subcellularLocation>
    <subcellularLocation>
        <location evidence="25">Cytoplasm</location>
    </subcellularLocation>
    <text>Phosphorylation at Thr-596 by PRKCZ/aPKC and subsequent interaction with 14-3-3 protein YWHAZ promotes relocation from the cell membrane to the cytoplasm.</text>
</comment>
<comment type="alternative products">
    <event type="alternative promoter"/>
    <event type="alternative splicing"/>
    <isoform>
        <id>Q7KZI7-1</id>
        <name evidence="33">1</name>
        <name>Alpha</name>
        <sequence type="displayed"/>
    </isoform>
    <isoform>
        <id>Q7KZI7-2</id>
        <name evidence="27">2</name>
        <sequence type="described" ref="VSP_051705 VSP_051706"/>
    </isoform>
    <isoform>
        <id>Q7KZI7-3</id>
        <name evidence="27">3</name>
        <sequence type="described" ref="VSP_051705 VSP_051707"/>
    </isoform>
    <isoform>
        <id>Q7KZI7-4</id>
        <name evidence="10">4</name>
        <name evidence="10">Par-1Balpha</name>
        <sequence type="described" ref="VSP_051706 VSP_051707"/>
    </isoform>
    <isoform>
        <id>Q7KZI7-5</id>
        <name>5</name>
        <sequence type="described" ref="VSP_051706 VSP_051708"/>
    </isoform>
    <isoform>
        <id>Q7KZI7-6</id>
        <name evidence="33">6</name>
        <name>Beta</name>
        <sequence type="described" ref="VSP_051705"/>
    </isoform>
    <isoform>
        <id>Q7KZI7-7</id>
        <name evidence="33">7</name>
        <sequence type="described" ref="VSP_051705 VSP_051706 VSP_051707"/>
    </isoform>
    <isoform>
        <id>Q7KZI7-8</id>
        <name evidence="33">8</name>
        <sequence type="described" ref="VSP_051707"/>
    </isoform>
    <isoform>
        <id>Q7KZI7-9</id>
        <name evidence="33">9</name>
        <sequence type="described" ref="VSP_051706"/>
    </isoform>
    <isoform>
        <id>Q7KZI7-10</id>
        <name evidence="33">10</name>
        <sequence type="described" ref="VSP_051705 VSP_051706 VSP_051708"/>
    </isoform>
    <isoform>
        <id>Q7KZI7-11</id>
        <name evidence="33">11</name>
        <sequence type="described" ref="VSP_051708"/>
    </isoform>
    <isoform>
        <id>Q7KZI7-12</id>
        <name evidence="33">12</name>
        <sequence type="described" ref="VSP_051705 VSP_051708"/>
    </isoform>
    <isoform>
        <id>Q7KZI7-13</id>
        <name>13</name>
        <sequence type="described" ref="VSP_051705 VSP_039872 VSP_051706 VSP_051707"/>
    </isoform>
    <isoform>
        <id>Q7KZI7-14</id>
        <name>14</name>
        <sequence type="described" ref="VSP_051705 VSP_039872 VSP_051707"/>
    </isoform>
    <isoform>
        <id>Q7KZI7-15</id>
        <name>15</name>
        <sequence type="described" ref="VSP_039872 VSP_051706 VSP_041853"/>
    </isoform>
    <isoform>
        <id>Q7KZI7-16</id>
        <name>16</name>
        <sequence type="described" ref="VSP_039872 VSP_051706 VSP_051707"/>
    </isoform>
</comment>
<comment type="tissue specificity">
    <text evidence="27">High levels of expression in heart, brain, skeletal muscle and pancreas, lower levels observed in lung, liver and kidney.</text>
</comment>
<comment type="domain">
    <text evidence="17">The UBA domain does not seem to bind ubiquitin and ubiquitin-like and might play a role in regulating the enzyme conformation and localization. Activation of the kinase activity following phosphorylation at Thr-208 is accompanied by a conformational change that alters the orientation of the UBA domain with respect to the catalytic domain.</text>
</comment>
<comment type="domain">
    <text evidence="1">The KA1 domain mediates binding to phospholipids and targeting to membranes.</text>
</comment>
<comment type="PTM">
    <text evidence="12 13 15">Autophosphorylated. Phosphorylated at Thr-208 by STK11/LKB1 in complex with STE20-related adapter-alpha (STRADA) pseudo kinase and CAB39. Phosphorylation at Thr-208 by TAOK1 activates the kinase activity, leading to phosphorylation and detachment of MAPT/TAU from microtubules. Phosphorylation at Ser-212 by GSK3-beta (GSK3B) inhibits the kinase activity. Phosphorylation by CaMK1 promotes activity and is required to promote neurite outgrowth. Phosphorylation at Thr-596 by PRKCZ/aPKC in polarized epithelial cells inhibits the kinase activity and promotes binding to 14-3-3 protein YWHAZ, leading to relocation from cell membrane to cytoplasm.</text>
</comment>
<comment type="miscellaneous">
    <molecule>Isoform 1</molecule>
    <text>Produced by alternative promoter usage.</text>
</comment>
<comment type="miscellaneous">
    <molecule>Isoform 2</molecule>
    <text evidence="27">Produced by alternative splicing of isoform 6.</text>
</comment>
<comment type="miscellaneous">
    <molecule>Isoform 3</molecule>
    <text evidence="27">Produced by alternative splicing of isoform 6.</text>
</comment>
<comment type="miscellaneous">
    <molecule>Isoform 4</molecule>
    <text evidence="10">Produced by alternative splicing of isoform 1.</text>
</comment>
<comment type="miscellaneous">
    <molecule>Isoform 5</molecule>
    <text evidence="33">Produced by alternative splicing of isoform 1.</text>
</comment>
<comment type="miscellaneous">
    <molecule>Isoform 6</molecule>
    <text evidence="33">Produced by alternative promoter usage.</text>
</comment>
<comment type="miscellaneous">
    <molecule>Isoform 7</molecule>
    <text evidence="33">Produced by alternative splicing of isoform 6.</text>
</comment>
<comment type="miscellaneous">
    <molecule>Isoform 8</molecule>
    <text evidence="33">Produced by alternative splicing of isoform 1.</text>
</comment>
<comment type="miscellaneous">
    <molecule>Isoform 9</molecule>
    <text evidence="33">Produced by alternative splicing of isoform 1.</text>
</comment>
<comment type="miscellaneous">
    <molecule>Isoform 10</molecule>
    <text evidence="33">Produced by alternative splicing of isoform 6.</text>
</comment>
<comment type="miscellaneous">
    <molecule>Isoform 11</molecule>
    <text evidence="33">Produced by alternative splicing of isoform 1.</text>
</comment>
<comment type="miscellaneous">
    <molecule>Isoform 12</molecule>
    <text evidence="33">Produced by alternative splicing of isoform 6.</text>
</comment>
<comment type="miscellaneous">
    <molecule>Isoform 13</molecule>
    <text evidence="33">Produced by alternative splicing of isoform 6.</text>
</comment>
<comment type="miscellaneous">
    <molecule>Isoform 14</molecule>
    <text evidence="33">Produced by alternative splicing of isoform 6.</text>
</comment>
<comment type="miscellaneous">
    <molecule>Isoform 15</molecule>
    <text evidence="33">Produced by alternative splicing of isoform 1.</text>
</comment>
<comment type="miscellaneous">
    <molecule>Isoform 16</molecule>
    <text evidence="33">Produced by alternative splicing of isoform 1.</text>
</comment>
<comment type="similarity">
    <text evidence="33">Belongs to the protein kinase superfamily. CAMK Ser/Thr protein kinase family. SNF1 subfamily.</text>
</comment>
<comment type="sequence caution" evidence="33">
    <conflict type="erroneous initiation">
        <sequence resource="EMBL-CDS" id="AAK82368"/>
    </conflict>
    <text>Truncated N-terminus.</text>
</comment>
<organism>
    <name type="scientific">Homo sapiens</name>
    <name type="common">Human</name>
    <dbReference type="NCBI Taxonomy" id="9606"/>
    <lineage>
        <taxon>Eukaryota</taxon>
        <taxon>Metazoa</taxon>
        <taxon>Chordata</taxon>
        <taxon>Craniata</taxon>
        <taxon>Vertebrata</taxon>
        <taxon>Euteleostomi</taxon>
        <taxon>Mammalia</taxon>
        <taxon>Eutheria</taxon>
        <taxon>Euarchontoglires</taxon>
        <taxon>Primates</taxon>
        <taxon>Haplorrhini</taxon>
        <taxon>Catarrhini</taxon>
        <taxon>Hominidae</taxon>
        <taxon>Homo</taxon>
    </lineage>
</organism>
<keyword id="KW-0002">3D-structure</keyword>
<keyword id="KW-0877">Alternative promoter usage</keyword>
<keyword id="KW-0025">Alternative splicing</keyword>
<keyword id="KW-0067">ATP-binding</keyword>
<keyword id="KW-1003">Cell membrane</keyword>
<keyword id="KW-0966">Cell projection</keyword>
<keyword id="KW-0963">Cytoplasm</keyword>
<keyword id="KW-0206">Cytoskeleton</keyword>
<keyword id="KW-0217">Developmental protein</keyword>
<keyword id="KW-0221">Differentiation</keyword>
<keyword id="KW-0418">Kinase</keyword>
<keyword id="KW-0446">Lipid-binding</keyword>
<keyword id="KW-0460">Magnesium</keyword>
<keyword id="KW-0472">Membrane</keyword>
<keyword id="KW-0479">Metal-binding</keyword>
<keyword id="KW-0547">Nucleotide-binding</keyword>
<keyword id="KW-0597">Phosphoprotein</keyword>
<keyword id="KW-1267">Proteomics identification</keyword>
<keyword id="KW-1185">Reference proteome</keyword>
<keyword id="KW-0723">Serine/threonine-protein kinase</keyword>
<keyword id="KW-0808">Transferase</keyword>
<keyword id="KW-0879">Wnt signaling pathway</keyword>
<evidence type="ECO:0000250" key="1"/>
<evidence type="ECO:0000250" key="2">
    <source>
        <dbReference type="UniProtKB" id="O08678"/>
    </source>
</evidence>
<evidence type="ECO:0000250" key="3">
    <source>
        <dbReference type="UniProtKB" id="O08679"/>
    </source>
</evidence>
<evidence type="ECO:0000250" key="4">
    <source>
        <dbReference type="UniProtKB" id="Q9H0K1"/>
    </source>
</evidence>
<evidence type="ECO:0000255" key="5">
    <source>
        <dbReference type="PROSITE-ProRule" id="PRU00159"/>
    </source>
</evidence>
<evidence type="ECO:0000255" key="6">
    <source>
        <dbReference type="PROSITE-ProRule" id="PRU00212"/>
    </source>
</evidence>
<evidence type="ECO:0000255" key="7">
    <source>
        <dbReference type="PROSITE-ProRule" id="PRU00565"/>
    </source>
</evidence>
<evidence type="ECO:0000255" key="8">
    <source>
        <dbReference type="PROSITE-ProRule" id="PRU10027"/>
    </source>
</evidence>
<evidence type="ECO:0000256" key="9">
    <source>
        <dbReference type="SAM" id="MobiDB-lite"/>
    </source>
</evidence>
<evidence type="ECO:0000269" key="10">
    <source>
    </source>
</evidence>
<evidence type="ECO:0000269" key="11">
    <source>
    </source>
</evidence>
<evidence type="ECO:0000269" key="12">
    <source>
    </source>
</evidence>
<evidence type="ECO:0000269" key="13">
    <source>
    </source>
</evidence>
<evidence type="ECO:0000269" key="14">
    <source>
    </source>
</evidence>
<evidence type="ECO:0000269" key="15">
    <source>
    </source>
</evidence>
<evidence type="ECO:0000269" key="16">
    <source>
    </source>
</evidence>
<evidence type="ECO:0000269" key="17">
    <source>
    </source>
</evidence>
<evidence type="ECO:0000269" key="18">
    <source>
    </source>
</evidence>
<evidence type="ECO:0000269" key="19">
    <source>
    </source>
</evidence>
<evidence type="ECO:0000269" key="20">
    <source>
    </source>
</evidence>
<evidence type="ECO:0000269" key="21">
    <source>
    </source>
</evidence>
<evidence type="ECO:0000269" key="22">
    <source>
    </source>
</evidence>
<evidence type="ECO:0000269" key="23">
    <source>
    </source>
</evidence>
<evidence type="ECO:0000269" key="24">
    <source>
    </source>
</evidence>
<evidence type="ECO:0000269" key="25">
    <source>
    </source>
</evidence>
<evidence type="ECO:0000269" key="26">
    <source>
    </source>
</evidence>
<evidence type="ECO:0000269" key="27">
    <source>
    </source>
</evidence>
<evidence type="ECO:0000303" key="28">
    <source>
    </source>
</evidence>
<evidence type="ECO:0000303" key="29">
    <source>
    </source>
</evidence>
<evidence type="ECO:0000303" key="30">
    <source>
    </source>
</evidence>
<evidence type="ECO:0000303" key="31">
    <source ref="2"/>
</evidence>
<evidence type="ECO:0000303" key="32">
    <source ref="3"/>
</evidence>
<evidence type="ECO:0000305" key="33"/>
<evidence type="ECO:0000312" key="34">
    <source>
        <dbReference type="EMBL" id="AAH08771.2"/>
    </source>
</evidence>
<evidence type="ECO:0000312" key="35">
    <source>
        <dbReference type="EMBL" id="AAH84540.1"/>
    </source>
</evidence>
<evidence type="ECO:0000312" key="36">
    <source>
        <dbReference type="EMBL" id="AAK82368.1"/>
    </source>
</evidence>
<evidence type="ECO:0000312" key="37">
    <source>
        <dbReference type="EMBL" id="BAD37141.1"/>
    </source>
</evidence>
<evidence type="ECO:0000312" key="38">
    <source>
        <dbReference type="EMBL" id="CAA66229.1"/>
    </source>
</evidence>
<evidence type="ECO:0000312" key="39">
    <source>
        <dbReference type="EMBL" id="CAA80914.1"/>
    </source>
</evidence>
<evidence type="ECO:0007744" key="40">
    <source>
    </source>
</evidence>
<evidence type="ECO:0007744" key="41">
    <source>
    </source>
</evidence>
<evidence type="ECO:0007744" key="42">
    <source>
    </source>
</evidence>
<evidence type="ECO:0007744" key="43">
    <source>
    </source>
</evidence>
<evidence type="ECO:0007744" key="44">
    <source>
    </source>
</evidence>
<evidence type="ECO:0007744" key="45">
    <source>
    </source>
</evidence>
<evidence type="ECO:0007744" key="46">
    <source>
    </source>
</evidence>
<evidence type="ECO:0007744" key="47">
    <source>
    </source>
</evidence>
<evidence type="ECO:0007744" key="48">
    <source>
    </source>
</evidence>
<evidence type="ECO:0007829" key="49">
    <source>
        <dbReference type="PDB" id="8TXY"/>
    </source>
</evidence>
<gene>
    <name evidence="34" type="primary">MARK2</name>
    <name type="synonym">EMK1</name>
</gene>
<sequence length="788" mass="87911">MSSARTPLPTLNERDTEQPTLGHLDSKPSSKSNMIRGRNSATSADEQPHIGNYRLLKTIGKGNFAKVKLARHILTGKEVAVKIIDKTQLNSSSLQKLFREVRIMKVLNHPNIVKLFEVIETEKTLYLVMEYASGGEVFDYLVAHGRMKEKEARAKFRQIVSAVQYCHQKFIVHRDLKAENLLLDADMNIKIADFGFSNEFTFGNKLDTFCGSPPYAAPELFQGKKYDGPEVDVWSLGVILYTLVSGSLPFDGQNLKELRERVLRGKYRIPFYMSTDCENLLKKFLILNPSKRGTLEQIMKDRWMNVGHEDDELKPYVEPLPDYKDPRRTELMVSMGYTREEIQDSLVGQRYNEVMATYLLLGYKSSELEGDTITLKPRPSADLTNSSAPSPSHKVQRSVSANPKQRRFSDQAAGPAIPTSNSYSKKTQSNNAENKRPEEDRESGRKASSTAKVPASPLPGLERKKTTPTPSTNSVLSTSTNRSRNSPLLERASLGQASIQNGKDSLTMPGSRASTASASAAVSAARPRQHQKSMSASVHPNKASGLPPTESNCEVPRPSTAPQRVPVASPSAHNISSSGGAPDRTNFPRGVSSRSTFHAGQLRQVRDQQNLPYGVTPASPSGHSQGRRGASGSIFSKFTSKFVRRNLSFRFARRNLNEPESKDRVETLRPHVVGSGGNDKEKEEFREAKPRSLRFTWSMKTTSSMEPNEMMREIRKVLDANSCQSELHEKYMLLCMHGTPGHEDFVQWEMEVCKLPRLSLNGVRFKRISGTSMAFKNIASKIANELKL</sequence>
<protein>
    <recommendedName>
        <fullName>Serine/threonine-protein kinase MARK2</fullName>
        <ecNumber>2.7.11.1</ecNumber>
        <ecNumber>2.7.11.26</ecNumber>
    </recommendedName>
    <alternativeName>
        <fullName>ELKL motif kinase 1</fullName>
        <shortName>EMK-1</shortName>
    </alternativeName>
    <alternativeName>
        <fullName>MAP/microtubule affinity-regulating kinase 2</fullName>
    </alternativeName>
    <alternativeName>
        <fullName>PAR1 homolog</fullName>
    </alternativeName>
    <alternativeName>
        <fullName>PAR1 homolog b</fullName>
        <shortName>Par-1b</shortName>
        <shortName>Par1b</shortName>
    </alternativeName>
</protein>
<accession>Q7KZI7</accession>
<accession>Q15449</accession>
<accession>Q15524</accession>
<accession>Q5XGA3</accession>
<accession>Q68A18</accession>
<accession>Q96HB3</accession>
<accession>Q96RG0</accession>
<reference evidence="33 38" key="1">
    <citation type="journal article" date="1998" name="Cytogenet. Cell Genet.">
        <title>Human serine/threonine protein kinase EMK1: genome structure and cDNA cloning of isoforms produced by alternative splicing.</title>
        <authorList>
            <person name="Espinosa L."/>
            <person name="Navarro E."/>
        </authorList>
    </citation>
    <scope>NUCLEOTIDE SEQUENCE [MRNA] (ISOFORMS 2 AND 3)</scope>
    <scope>TISSUE SPECIFICITY</scope>
    <source>
        <tissue evidence="38">Colon</tissue>
    </source>
</reference>
<reference evidence="33 37" key="2">
    <citation type="submission" date="2004-08" db="EMBL/GenBank/DDBJ databases">
        <authorList>
            <person name="Sugiyama A."/>
            <person name="Inoue H."/>
            <person name="Oka M."/>
        </authorList>
    </citation>
    <scope>NUCLEOTIDE SEQUENCE [MRNA] (ISOFORM 5)</scope>
    <source>
        <tissue evidence="38">Kidney</tissue>
    </source>
</reference>
<reference evidence="33 37" key="3">
    <citation type="submission" date="2003-05" db="EMBL/GenBank/DDBJ databases">
        <title>Cloning of human full-length CDSs in BD Creator(TM) system donor vector.</title>
        <authorList>
            <person name="Kalnine N."/>
            <person name="Chen X."/>
            <person name="Rolfs A."/>
            <person name="Halleck A."/>
            <person name="Hines L."/>
            <person name="Eisenstein S."/>
            <person name="Koundinya M."/>
            <person name="Raphael J."/>
            <person name="Moreira D."/>
            <person name="Kelley T."/>
            <person name="LaBaer J."/>
            <person name="Lin Y."/>
            <person name="Phelan M."/>
            <person name="Farmer A."/>
        </authorList>
    </citation>
    <scope>NUCLEOTIDE SEQUENCE [LARGE SCALE MRNA] (ISOFORM 6)</scope>
</reference>
<reference key="4">
    <citation type="journal article" date="2006" name="Nature">
        <title>Human chromosome 11 DNA sequence and analysis including novel gene identification.</title>
        <authorList>
            <person name="Taylor T.D."/>
            <person name="Noguchi H."/>
            <person name="Totoki Y."/>
            <person name="Toyoda A."/>
            <person name="Kuroki Y."/>
            <person name="Dewar K."/>
            <person name="Lloyd C."/>
            <person name="Itoh T."/>
            <person name="Takeda T."/>
            <person name="Kim D.-W."/>
            <person name="She X."/>
            <person name="Barlow K.F."/>
            <person name="Bloom T."/>
            <person name="Bruford E."/>
            <person name="Chang J.L."/>
            <person name="Cuomo C.A."/>
            <person name="Eichler E."/>
            <person name="FitzGerald M.G."/>
            <person name="Jaffe D.B."/>
            <person name="LaButti K."/>
            <person name="Nicol R."/>
            <person name="Park H.-S."/>
            <person name="Seaman C."/>
            <person name="Sougnez C."/>
            <person name="Yang X."/>
            <person name="Zimmer A.R."/>
            <person name="Zody M.C."/>
            <person name="Birren B.W."/>
            <person name="Nusbaum C."/>
            <person name="Fujiyama A."/>
            <person name="Hattori M."/>
            <person name="Rogers J."/>
            <person name="Lander E.S."/>
            <person name="Sakaki Y."/>
        </authorList>
    </citation>
    <scope>NUCLEOTIDE SEQUENCE [LARGE SCALE GENOMIC DNA]</scope>
</reference>
<reference evidence="33 34" key="5">
    <citation type="journal article" date="2004" name="Genome Res.">
        <title>The status, quality, and expansion of the NIH full-length cDNA project: the Mammalian Gene Collection (MGC).</title>
        <authorList>
            <consortium name="The MGC Project Team"/>
        </authorList>
    </citation>
    <scope>NUCLEOTIDE SEQUENCE [LARGE SCALE MRNA] (ISOFORM 4)</scope>
    <scope>NUCLEOTIDE SEQUENCE [LARGE SCALE MRNA] OF 11-755 (ISOFORM 1)</scope>
    <source>
        <tissue evidence="35">Kidney</tissue>
        <tissue evidence="34">Placenta</tissue>
    </source>
</reference>
<reference evidence="33 36" key="6">
    <citation type="journal article" date="2001" name="Nat. Cell Biol.">
        <title>PAR-1 is a Dishevelled-associated kinase and a positive regulator of Wnt signalling.</title>
        <authorList>
            <person name="Sun T.-Q."/>
            <person name="Lu B."/>
            <person name="Feng J.-J."/>
            <person name="Reinhard C."/>
            <person name="Jan Y.N."/>
            <person name="Fantl W.J."/>
            <person name="Williams L.T."/>
        </authorList>
    </citation>
    <scope>NUCLEOTIDE SEQUENCE [MRNA] OF 28-788 (ISOFORM 4)</scope>
    <scope>FUNCTION</scope>
</reference>
<reference evidence="33 39" key="7">
    <citation type="journal article" date="1993" name="Cell Growth Differ.">
        <title>Identification of 21 novel human protein kinases, including 3 members of a family related to the cell cycle regulator nimA of Aspergillus nidulans.</title>
        <authorList>
            <person name="Schultz S.J."/>
            <person name="Nigg E.A."/>
        </authorList>
    </citation>
    <scope>NUCLEOTIDE SEQUENCE [MRNA] OF 190-237</scope>
</reference>
<reference key="8">
    <citation type="journal article" date="2002" name="Mol. Biol. Cell">
        <title>Protein kinase MARK/PAR-1 is required for neurite outgrowth and establishment of neuronal polarity.</title>
        <authorList>
            <person name="Biernat J."/>
            <person name="Wu Y.Z."/>
            <person name="Timm T."/>
            <person name="Zheng-Fischhofer Q."/>
            <person name="Mandelkow E."/>
            <person name="Meijer L."/>
            <person name="Mandelkow E.M."/>
        </authorList>
    </citation>
    <scope>FUNCTION</scope>
    <scope>ACTIVITY REGULATION</scope>
</reference>
<reference evidence="33" key="9">
    <citation type="journal article" date="2004" name="Biochim. Biophys. Acta">
        <title>Splicing alterations in human renal allografts: detection of a new splice variant of protein kinase Par1/Emk1 whose expression is associated with an increase of inflammation in protocol biopsies of transplanted patients.</title>
        <authorList>
            <person name="Hueso M."/>
            <person name="Beltran V."/>
            <person name="Moreso F."/>
            <person name="Ciriero E."/>
            <person name="Fulladosa X."/>
            <person name="Grinyo J.M."/>
            <person name="Seron D."/>
            <person name="Navarro E."/>
        </authorList>
    </citation>
    <scope>FUNCTION</scope>
    <scope>ALTERNATIVE PROMOTER USAGE</scope>
</reference>
<reference evidence="33" key="10">
    <citation type="journal article" date="2004" name="EMBO J.">
        <title>LKB1 is a master kinase that activates 13 kinases of the AMPK subfamily, including MARK/PAR-1.</title>
        <authorList>
            <person name="Lizcano J.M."/>
            <person name="Goeransson O."/>
            <person name="Toth R."/>
            <person name="Deak M."/>
            <person name="Morrice N.A."/>
            <person name="Boudeau J."/>
            <person name="Hawley S.A."/>
            <person name="Udd L."/>
            <person name="Maekelae T.P."/>
            <person name="Hardie D.G."/>
            <person name="Alessi D.R."/>
        </authorList>
    </citation>
    <scope>FUNCTION</scope>
    <scope>ACTIVITY REGULATION</scope>
    <scope>PHOSPHORYLATION AT THR-208</scope>
    <scope>MUTAGENESIS OF THR-208</scope>
</reference>
<reference evidence="33" key="11">
    <citation type="journal article" date="2004" name="Proc. Natl. Acad. Sci. U.S.A.">
        <title>Par-1 promotes a hepatic mode of apical protein trafficking in MDCK cells.</title>
        <authorList>
            <person name="Cohen D."/>
            <person name="Rodriguez-Boulan E."/>
            <person name="Musch A."/>
        </authorList>
    </citation>
    <scope>FUNCTION</scope>
</reference>
<reference key="12">
    <citation type="journal article" date="2004" name="Curr. Biol.">
        <title>Atypical PKC phosphorylates PAR-1 kinases to regulate localization and activity.</title>
        <authorList>
            <person name="Hurov J.B."/>
            <person name="Watkins J.L."/>
            <person name="Piwnica-Worms H."/>
        </authorList>
    </citation>
    <scope>PHOSPHORYLATION AT THR-596</scope>
    <scope>MUTAGENESIS OF THR-596</scope>
    <scope>SUBCELLULAR LOCATION</scope>
</reference>
<reference evidence="33" key="13">
    <citation type="journal article" date="2004" name="Curr. Biol.">
        <title>aPKC acts upstream of PAR-1b in both the establishment and maintenance of mammalian epithelial polarity.</title>
        <authorList>
            <person name="Suzuki A."/>
            <person name="Hirata M."/>
            <person name="Kamimura K."/>
            <person name="Maniwa R."/>
            <person name="Yamanaka T."/>
            <person name="Mizuno K."/>
            <person name="Kishikawa M."/>
            <person name="Hirose H."/>
            <person name="Amano Y."/>
            <person name="Izumi N."/>
            <person name="Miwa Y."/>
            <person name="Ohno S."/>
        </authorList>
    </citation>
    <scope>FUNCTION</scope>
    <scope>SUBCELLULAR LOCATION</scope>
    <scope>PHOSPHORYLATION AT THR-596</scope>
    <scope>MUTAGENESIS OF THR-596</scope>
    <scope>INTERACTION WITH YWHAZ</scope>
</reference>
<reference key="14">
    <citation type="journal article" date="2006" name="Cell">
        <title>Global, in vivo, and site-specific phosphorylation dynamics in signaling networks.</title>
        <authorList>
            <person name="Olsen J.V."/>
            <person name="Blagoev B."/>
            <person name="Gnad F."/>
            <person name="Macek B."/>
            <person name="Kumar C."/>
            <person name="Mortensen P."/>
            <person name="Mann M."/>
        </authorList>
    </citation>
    <scope>PHOSPHORYLATION [LARGE SCALE ANALYSIS] AT SER-486</scope>
    <scope>IDENTIFICATION BY MASS SPECTROMETRY [LARGE SCALE ANALYSIS]</scope>
    <source>
        <tissue>Cervix carcinoma</tissue>
    </source>
</reference>
<reference key="15">
    <citation type="journal article" date="2006" name="Mol. Biol. Cell">
        <title>MARK2/EMK1/Par-1Balpha phosphorylation of Rab11-family interacting protein 2 is necessary for the timely establishment of polarity in Madin-Darby canine kidney cells.</title>
        <authorList>
            <person name="Ducharme N.A."/>
            <person name="Hales C.M."/>
            <person name="Lapierre L.A."/>
            <person name="Ham A.J."/>
            <person name="Oztan A."/>
            <person name="Apodaca G."/>
            <person name="Goldenring J.R."/>
        </authorList>
    </citation>
    <scope>FUNCTION IN PHOSPHORYLATION OF RAB11FIP2</scope>
</reference>
<reference key="16">
    <citation type="journal article" date="2006" name="Mol. Cell. Biol.">
        <title>New role for hPar-1 kinases EMK and C-TAK1 in regulating localization and activity of class IIa histone deacetylases.</title>
        <authorList>
            <person name="Dequiedt F."/>
            <person name="Martin M."/>
            <person name="Von Blume J."/>
            <person name="Vertommen D."/>
            <person name="Lecomte E."/>
            <person name="Mari N."/>
            <person name="Heinen M.F."/>
            <person name="Bachmann M."/>
            <person name="Twizere J.C."/>
            <person name="Huang M.C."/>
            <person name="Rider M.H."/>
            <person name="Piwnica-Worms H."/>
            <person name="Seufferlein T."/>
            <person name="Kettmann R."/>
        </authorList>
    </citation>
    <scope>FUNCTION IN PHOSPHORYLATION OF HDAC7</scope>
</reference>
<reference key="17">
    <citation type="journal article" date="2006" name="Nat. Biotechnol.">
        <title>A probability-based approach for high-throughput protein phosphorylation analysis and site localization.</title>
        <authorList>
            <person name="Beausoleil S.A."/>
            <person name="Villen J."/>
            <person name="Gerber S.A."/>
            <person name="Rush J."/>
            <person name="Gygi S.P."/>
        </authorList>
    </citation>
    <scope>PHOSPHORYLATION [LARGE SCALE ANALYSIS] AT SER-456</scope>
    <scope>IDENTIFICATION BY MASS SPECTROMETRY [LARGE SCALE ANALYSIS]</scope>
    <source>
        <tissue>Cervix carcinoma</tissue>
    </source>
</reference>
<reference key="18">
    <citation type="journal article" date="2007" name="Nature">
        <title>Helicobacter pylori CagA targets PAR1/MARK kinase to disrupt epithelial cell polarity.</title>
        <authorList>
            <person name="Saadat I."/>
            <person name="Higashi H."/>
            <person name="Obuse C."/>
            <person name="Umeda M."/>
            <person name="Murata-Kamiya N."/>
            <person name="Saito Y."/>
            <person name="Lu H."/>
            <person name="Ohnishi N."/>
            <person name="Azuma T."/>
            <person name="Suzuki A."/>
            <person name="Ohno S."/>
            <person name="Hatakeyama M."/>
        </authorList>
    </citation>
    <scope>INTERACTION WITH H.PYLORI CAGA (MICROBIAL INFECTION)</scope>
</reference>
<reference key="19">
    <citation type="journal article" date="2008" name="J. Proteome Res.">
        <title>Combining protein-based IMAC, peptide-based IMAC, and MudPIT for efficient phosphoproteomic analysis.</title>
        <authorList>
            <person name="Cantin G.T."/>
            <person name="Yi W."/>
            <person name="Lu B."/>
            <person name="Park S.K."/>
            <person name="Xu T."/>
            <person name="Lee J.-D."/>
            <person name="Yates J.R. III"/>
        </authorList>
    </citation>
    <scope>PHOSPHORYLATION [LARGE SCALE ANALYSIS] AT SER-456 AND SER-486</scope>
    <scope>IDENTIFICATION BY MASS SPECTROMETRY [LARGE SCALE ANALYSIS]</scope>
    <source>
        <tissue>Cervix carcinoma</tissue>
    </source>
</reference>
<reference key="20">
    <citation type="journal article" date="2008" name="J. Proteome Res.">
        <title>Phosphoproteome of resting human platelets.</title>
        <authorList>
            <person name="Zahedi R.P."/>
            <person name="Lewandrowski U."/>
            <person name="Wiesner J."/>
            <person name="Wortelkamp S."/>
            <person name="Moebius J."/>
            <person name="Schuetz C."/>
            <person name="Walter U."/>
            <person name="Gambaryan S."/>
            <person name="Sickmann A."/>
        </authorList>
    </citation>
    <scope>PHOSPHORYLATION [LARGE SCALE ANALYSIS] AT SER-456</scope>
    <scope>IDENTIFICATION BY MASS SPECTROMETRY [LARGE SCALE ANALYSIS]</scope>
    <source>
        <tissue>Platelet</tissue>
    </source>
</reference>
<reference key="21">
    <citation type="journal article" date="2008" name="Mol. Cell">
        <title>Kinase-selective enrichment enables quantitative phosphoproteomics of the kinome across the cell cycle.</title>
        <authorList>
            <person name="Daub H."/>
            <person name="Olsen J.V."/>
            <person name="Bairlein M."/>
            <person name="Gnad F."/>
            <person name="Oppermann F.S."/>
            <person name="Korner R."/>
            <person name="Greff Z."/>
            <person name="Keri G."/>
            <person name="Stemmann O."/>
            <person name="Mann M."/>
        </authorList>
    </citation>
    <scope>PHOSPHORYLATION [LARGE SCALE ANALYSIS] AT SER-409; SER-456; SER-486 AND SER-493</scope>
    <scope>IDENTIFICATION BY MASS SPECTROMETRY [LARGE SCALE ANALYSIS]</scope>
    <source>
        <tissue>Cervix carcinoma</tissue>
    </source>
</reference>
<reference key="22">
    <citation type="journal article" date="2008" name="Proc. Natl. Acad. Sci. U.S.A.">
        <title>Glucose controls CREB activity in islet cells via regulated phosphorylation of TORC2.</title>
        <authorList>
            <person name="Jansson D."/>
            <person name="Ng A.C."/>
            <person name="Fu A."/>
            <person name="Depatie C."/>
            <person name="Al Azzabi M."/>
            <person name="Screaton R.A."/>
        </authorList>
    </citation>
    <scope>FUNCTION IN PHOSPHORYLATION OF CRTC2</scope>
</reference>
<reference key="23">
    <citation type="journal article" date="2006" name="Biochem. J.">
        <title>The ubiquitin-associated domain of AMPK-related kinases regulates conformation and LKB1-mediated phosphorylation and activation.</title>
        <authorList>
            <person name="Jaleel M."/>
            <person name="Villa F."/>
            <person name="Deak M."/>
            <person name="Toth R."/>
            <person name="Prescott A.R."/>
            <person name="Van Aalten D.M."/>
            <person name="Alessi D.R."/>
        </authorList>
    </citation>
    <scope>DOMAIN UBA</scope>
</reference>
<reference key="24">
    <citation type="journal article" date="2006" name="Mol. Cell. Proteomics">
        <title>Transgenic mouse proteomics identifies new 14-3-3-associated proteins involved in cytoskeletal rearrangements and cell signaling.</title>
        <authorList>
            <person name="Angrand P.O."/>
            <person name="Segura I."/>
            <person name="Voelkel P."/>
            <person name="Ghidelli S."/>
            <person name="Terry R."/>
            <person name="Brajenovic M."/>
            <person name="Vintersten K."/>
            <person name="Klein R."/>
            <person name="Superti-Furga G."/>
            <person name="Drewes G."/>
            <person name="Kuster B."/>
            <person name="Bouwmeester T."/>
            <person name="Acker-Palmer A."/>
        </authorList>
    </citation>
    <scope>INTERACTION WITH YWHAB; YWHAG AND YWHAQ</scope>
</reference>
<reference key="25">
    <citation type="journal article" date="2008" name="Proc. Natl. Acad. Sci. U.S.A.">
        <title>A quantitative atlas of mitotic phosphorylation.</title>
        <authorList>
            <person name="Dephoure N."/>
            <person name="Zhou C."/>
            <person name="Villen J."/>
            <person name="Beausoleil S.A."/>
            <person name="Bakalarski C.E."/>
            <person name="Elledge S.J."/>
            <person name="Gygi S.P."/>
        </authorList>
    </citation>
    <scope>PHOSPHORYLATION [LARGE SCALE ANALYSIS] AT SER-569</scope>
    <scope>PHOSPHORYLATION [LARGE SCALE ANALYSIS] AT SER-376 (ISOFORMS 13 AND 14)</scope>
    <scope>PHOSPHORYLATION [LARGE SCALE ANALYSIS] AT SER-409 (ISOFORMS 15 AND 16)</scope>
    <scope>IDENTIFICATION BY MASS SPECTROMETRY [LARGE SCALE ANALYSIS]</scope>
    <source>
        <tissue>Cervix carcinoma</tissue>
    </source>
</reference>
<reference key="26">
    <citation type="journal article" date="2009" name="Anal. Chem.">
        <title>Lys-N and trypsin cover complementary parts of the phosphoproteome in a refined SCX-based approach.</title>
        <authorList>
            <person name="Gauci S."/>
            <person name="Helbig A.O."/>
            <person name="Slijper M."/>
            <person name="Krijgsveld J."/>
            <person name="Heck A.J."/>
            <person name="Mohammed S."/>
        </authorList>
    </citation>
    <scope>IDENTIFICATION BY MASS SPECTROMETRY [LARGE SCALE ANALYSIS]</scope>
</reference>
<reference key="27">
    <citation type="journal article" date="2009" name="Mol. Cell. Proteomics">
        <title>Large-scale proteomics analysis of the human kinome.</title>
        <authorList>
            <person name="Oppermann F.S."/>
            <person name="Gnad F."/>
            <person name="Olsen J.V."/>
            <person name="Hornberger R."/>
            <person name="Greff Z."/>
            <person name="Keri G."/>
            <person name="Mann M."/>
            <person name="Daub H."/>
        </authorList>
    </citation>
    <scope>PHOSPHORYLATION [LARGE SCALE ANALYSIS] AT THR-208; SER-409; SER-456; SER-486 AND SER-722</scope>
    <scope>PHOSPHORYLATION [LARGE SCALE ANALYSIS] AT SER-376 (ISOFORMS 13 AND 14)</scope>
    <scope>PHOSPHORYLATION [LARGE SCALE ANALYSIS] AT SER-409 (ISOFORMS 15 AND 16)</scope>
    <scope>IDENTIFICATION BY MASS SPECTROMETRY [LARGE SCALE ANALYSIS]</scope>
</reference>
<reference key="28">
    <citation type="journal article" date="2010" name="Mol. Cell. Biol.">
        <title>Par1b/MARK2 phosphorylates kinesin-like motor protein GAKIN/KIF13B to regulate axon formation.</title>
        <authorList>
            <person name="Yoshimura Y."/>
            <person name="Terabayashi T."/>
            <person name="Miki H."/>
        </authorList>
    </citation>
    <scope>FUNCTION IN PHOSPHORYLATION OF KIF13B</scope>
</reference>
<reference key="29">
    <citation type="journal article" date="2009" name="Trends Biochem. Sci.">
        <title>The tau of MARK: a polarized view of the cytoskeleton.</title>
        <authorList>
            <person name="Matenia D."/>
            <person name="Mandelkow E.M."/>
        </authorList>
    </citation>
    <scope>REVIEW</scope>
</reference>
<reference key="30">
    <citation type="journal article" date="2010" name="FASEB J.">
        <title>Structure and function of polarity-inducing kinase family MARK/Par-1 within the branch of AMPK/Snf1-related kinases.</title>
        <authorList>
            <person name="Marx A."/>
            <person name="Nugoor C."/>
            <person name="Panneerselvam S."/>
            <person name="Mandelkow E."/>
        </authorList>
    </citation>
    <scope>REVIEW</scope>
</reference>
<reference key="31">
    <citation type="journal article" date="2010" name="Sci. Signal.">
        <title>Quantitative phosphoproteomics reveals widespread full phosphorylation site occupancy during mitosis.</title>
        <authorList>
            <person name="Olsen J.V."/>
            <person name="Vermeulen M."/>
            <person name="Santamaria A."/>
            <person name="Kumar C."/>
            <person name="Miller M.L."/>
            <person name="Jensen L.J."/>
            <person name="Gnad F."/>
            <person name="Cox J."/>
            <person name="Jensen T.S."/>
            <person name="Nigg E.A."/>
            <person name="Brunak S."/>
            <person name="Mann M."/>
        </authorList>
    </citation>
    <scope>IDENTIFICATION BY MASS SPECTROMETRY [LARGE SCALE ANALYSIS]</scope>
    <source>
        <tissue>Cervix carcinoma</tissue>
    </source>
</reference>
<reference key="32">
    <citation type="journal article" date="2011" name="BMC Syst. Biol.">
        <title>Initial characterization of the human central proteome.</title>
        <authorList>
            <person name="Burkard T.R."/>
            <person name="Planyavsky M."/>
            <person name="Kaupe I."/>
            <person name="Breitwieser F.P."/>
            <person name="Buerckstuemmer T."/>
            <person name="Bennett K.L."/>
            <person name="Superti-Furga G."/>
            <person name="Colinge J."/>
        </authorList>
    </citation>
    <scope>IDENTIFICATION BY MASS SPECTROMETRY [LARGE SCALE ANALYSIS]</scope>
</reference>
<reference key="33">
    <citation type="journal article" date="2011" name="Sci. Signal.">
        <title>System-wide temporal characterization of the proteome and phosphoproteome of human embryonic stem cell differentiation.</title>
        <authorList>
            <person name="Rigbolt K.T."/>
            <person name="Prokhorova T.A."/>
            <person name="Akimov V."/>
            <person name="Henningsen J."/>
            <person name="Johansen P.T."/>
            <person name="Kratchmarova I."/>
            <person name="Kassem M."/>
            <person name="Mann M."/>
            <person name="Olsen J.V."/>
            <person name="Blagoev B."/>
        </authorList>
    </citation>
    <scope>PHOSPHORYLATION [LARGE SCALE ANALYSIS] AT SER-40; SER-486 AND SER-619</scope>
    <scope>IDENTIFICATION BY MASS SPECTROMETRY [LARGE SCALE ANALYSIS]</scope>
</reference>
<reference key="34">
    <citation type="journal article" date="2013" name="J. Cell Sci.">
        <title>The novel PAR-1-binding protein MTCL1 has crucial roles in organizing microtubules in polarizing epithelial cells.</title>
        <authorList>
            <person name="Sato Y."/>
            <person name="Akitsu M."/>
            <person name="Amano Y."/>
            <person name="Yamashita K."/>
            <person name="Ide M."/>
            <person name="Shimada K."/>
            <person name="Yamashita A."/>
            <person name="Hirano H."/>
            <person name="Arakawa N."/>
            <person name="Maki T."/>
            <person name="Hayashi I."/>
            <person name="Ohno S."/>
            <person name="Suzuki A."/>
        </authorList>
    </citation>
    <scope>INTERACTION WITH MTCL1</scope>
    <scope>SUBCELLULAR LOCATION</scope>
</reference>
<reference key="35">
    <citation type="journal article" date="2013" name="J. Proteome Res.">
        <title>Toward a comprehensive characterization of a human cancer cell phosphoproteome.</title>
        <authorList>
            <person name="Zhou H."/>
            <person name="Di Palma S."/>
            <person name="Preisinger C."/>
            <person name="Peng M."/>
            <person name="Polat A.N."/>
            <person name="Heck A.J."/>
            <person name="Mohammed S."/>
        </authorList>
    </citation>
    <scope>PHOSPHORYLATION [LARGE SCALE ANALYSIS] AT SER-40; SER-456; THR-467; SER-486; SER-569; SER-571; SER-592; THR-596 AND SER-619</scope>
    <scope>IDENTIFICATION BY MASS SPECTROMETRY [LARGE SCALE ANALYSIS]</scope>
    <source>
        <tissue>Cervix carcinoma</tissue>
        <tissue>Erythroleukemia</tissue>
    </source>
</reference>
<reference key="36">
    <citation type="journal article" date="2013" name="NeuroMolecular Med.">
        <title>Role of individual MARK isoforms in phosphorylation of tau at Ser262 in Alzheimer's disease.</title>
        <authorList>
            <person name="Gu G.J."/>
            <person name="Lund H."/>
            <person name="Wu D."/>
            <person name="Blokzijl A."/>
            <person name="Classon C."/>
            <person name="von Euler G."/>
            <person name="Landegren U."/>
            <person name="Sunnemark D."/>
            <person name="Kamali-Moghaddam M."/>
        </authorList>
    </citation>
    <scope>FUNCTION</scope>
    <scope>INTERACTION WITH MAPT</scope>
    <scope>SUBCELLULAR LOCATION</scope>
</reference>
<reference key="37">
    <citation type="journal article" date="2010" name="Nat. Struct. Mol. Biol.">
        <title>Helicobacter pylori CagA inhibits PAR1-MARK family kinases by mimicking host substrates.</title>
        <authorList>
            <person name="Nesic D."/>
            <person name="Miller M.C."/>
            <person name="Quinkert Z.T."/>
            <person name="Stein M."/>
            <person name="Chait B.T."/>
            <person name="Stebbins C.E."/>
        </authorList>
    </citation>
    <scope>X-RAY CRYSTALLOGRAPHY (2.2 ANGSTROMS) OF 49-363 IN COMPLEX WITH H.PYLORI CAGA PEPTIDE INHIBITOR</scope>
</reference>
<name>MARK2_HUMAN</name>
<proteinExistence type="evidence at protein level"/>
<dbReference type="EC" id="2.7.11.1"/>
<dbReference type="EC" id="2.7.11.26"/>
<dbReference type="EMBL" id="X97630">
    <property type="protein sequence ID" value="CAA66229.1"/>
    <property type="molecule type" value="mRNA"/>
</dbReference>
<dbReference type="EMBL" id="AB188493">
    <property type="protein sequence ID" value="BAD37141.1"/>
    <property type="molecule type" value="mRNA"/>
</dbReference>
<dbReference type="EMBL" id="BT007342">
    <property type="protein sequence ID" value="AAP36006.1"/>
    <property type="molecule type" value="mRNA"/>
</dbReference>
<dbReference type="EMBL" id="AP003780">
    <property type="status" value="NOT_ANNOTATED_CDS"/>
    <property type="molecule type" value="Genomic_DNA"/>
</dbReference>
<dbReference type="EMBL" id="BC008771">
    <property type="protein sequence ID" value="AAH08771.2"/>
    <property type="molecule type" value="mRNA"/>
</dbReference>
<dbReference type="EMBL" id="BC084540">
    <property type="protein sequence ID" value="AAH84540.1"/>
    <property type="molecule type" value="mRNA"/>
</dbReference>
<dbReference type="EMBL" id="AF387638">
    <property type="protein sequence ID" value="AAK82368.1"/>
    <property type="status" value="ALT_INIT"/>
    <property type="molecule type" value="mRNA"/>
</dbReference>
<dbReference type="EMBL" id="Z25427">
    <property type="protein sequence ID" value="CAA80914.1"/>
    <property type="molecule type" value="mRNA"/>
</dbReference>
<dbReference type="CCDS" id="CCDS41665.1">
    <molecule id="Q7KZI7-14"/>
</dbReference>
<dbReference type="CCDS" id="CCDS53649.1">
    <molecule id="Q7KZI7-1"/>
</dbReference>
<dbReference type="CCDS" id="CCDS53650.1">
    <molecule id="Q7KZI7-5"/>
</dbReference>
<dbReference type="CCDS" id="CCDS53651.1">
    <molecule id="Q7KZI7-15"/>
</dbReference>
<dbReference type="CCDS" id="CCDS8051.2">
    <molecule id="Q7KZI7-16"/>
</dbReference>
<dbReference type="PIR" id="G01025">
    <property type="entry name" value="G01025"/>
</dbReference>
<dbReference type="PIR" id="I38217">
    <property type="entry name" value="I38217"/>
</dbReference>
<dbReference type="RefSeq" id="NP_001034558.2">
    <molecule id="Q7KZI7-1"/>
    <property type="nucleotide sequence ID" value="NM_001039469.3"/>
</dbReference>
<dbReference type="RefSeq" id="NP_001156768.1">
    <molecule id="Q7KZI7-5"/>
    <property type="nucleotide sequence ID" value="NM_001163296.2"/>
</dbReference>
<dbReference type="RefSeq" id="NP_001156769.1">
    <molecule id="Q7KZI7-15"/>
    <property type="nucleotide sequence ID" value="NM_001163297.2"/>
</dbReference>
<dbReference type="RefSeq" id="NP_004945.4">
    <molecule id="Q7KZI7-16"/>
    <property type="nucleotide sequence ID" value="NM_004954.4"/>
</dbReference>
<dbReference type="RefSeq" id="NP_059672.2">
    <molecule id="Q7KZI7-14"/>
    <property type="nucleotide sequence ID" value="NM_017490.4"/>
</dbReference>
<dbReference type="PDB" id="3IEC">
    <property type="method" value="X-ray"/>
    <property type="resolution" value="2.20 A"/>
    <property type="chains" value="A/B/C/D=49-363"/>
</dbReference>
<dbReference type="PDB" id="5EAK">
    <property type="method" value="X-ray"/>
    <property type="resolution" value="2.80 A"/>
    <property type="chains" value="A/B=39-364"/>
</dbReference>
<dbReference type="PDB" id="5KZ7">
    <property type="method" value="X-ray"/>
    <property type="resolution" value="3.20 A"/>
    <property type="chains" value="A/B=39-364"/>
</dbReference>
<dbReference type="PDB" id="5KZ8">
    <property type="method" value="X-ray"/>
    <property type="resolution" value="3.21 A"/>
    <property type="chains" value="A/B=39-364"/>
</dbReference>
<dbReference type="PDB" id="8TXY">
    <property type="method" value="X-ray"/>
    <property type="resolution" value="2.10 A"/>
    <property type="chains" value="A/B=47-363"/>
</dbReference>
<dbReference type="PDBsum" id="3IEC"/>
<dbReference type="PDBsum" id="5EAK"/>
<dbReference type="PDBsum" id="5KZ7"/>
<dbReference type="PDBsum" id="5KZ8"/>
<dbReference type="PDBsum" id="8TXY"/>
<dbReference type="SASBDB" id="Q7KZI7"/>
<dbReference type="SMR" id="Q7KZI7"/>
<dbReference type="BioGRID" id="108326">
    <property type="interactions" value="297"/>
</dbReference>
<dbReference type="CORUM" id="Q7KZI7"/>
<dbReference type="DIP" id="DIP-31321N"/>
<dbReference type="FunCoup" id="Q7KZI7">
    <property type="interactions" value="1740"/>
</dbReference>
<dbReference type="IntAct" id="Q7KZI7">
    <property type="interactions" value="132"/>
</dbReference>
<dbReference type="MINT" id="Q7KZI7"/>
<dbReference type="STRING" id="9606.ENSP00000385751"/>
<dbReference type="BindingDB" id="Q7KZI7"/>
<dbReference type="ChEMBL" id="CHEMBL3831"/>
<dbReference type="DrugBank" id="DB12010">
    <property type="generic name" value="Fostamatinib"/>
</dbReference>
<dbReference type="DrugCentral" id="Q7KZI7"/>
<dbReference type="GuidetoPHARMACOLOGY" id="2098"/>
<dbReference type="GlyGen" id="Q7KZI7">
    <property type="glycosylation" value="7 sites, 3 N-linked glycans (3 sites), 1 O-linked glycan (1 site)"/>
</dbReference>
<dbReference type="iPTMnet" id="Q7KZI7"/>
<dbReference type="PhosphoSitePlus" id="Q7KZI7"/>
<dbReference type="SwissPalm" id="Q7KZI7"/>
<dbReference type="BioMuta" id="MARK2"/>
<dbReference type="DMDM" id="62510922"/>
<dbReference type="CPTAC" id="CPTAC-3015"/>
<dbReference type="CPTAC" id="CPTAC-3016"/>
<dbReference type="jPOST" id="Q7KZI7"/>
<dbReference type="MassIVE" id="Q7KZI7"/>
<dbReference type="PaxDb" id="9606-ENSP00000385751"/>
<dbReference type="PeptideAtlas" id="Q7KZI7"/>
<dbReference type="ProteomicsDB" id="68707">
    <molecule id="Q7KZI7-1"/>
</dbReference>
<dbReference type="ProteomicsDB" id="68708">
    <molecule id="Q7KZI7-10"/>
</dbReference>
<dbReference type="ProteomicsDB" id="68709">
    <molecule id="Q7KZI7-11"/>
</dbReference>
<dbReference type="ProteomicsDB" id="68710">
    <molecule id="Q7KZI7-12"/>
</dbReference>
<dbReference type="ProteomicsDB" id="68711">
    <molecule id="Q7KZI7-13"/>
</dbReference>
<dbReference type="ProteomicsDB" id="68712">
    <molecule id="Q7KZI7-14"/>
</dbReference>
<dbReference type="ProteomicsDB" id="68713">
    <molecule id="Q7KZI7-15"/>
</dbReference>
<dbReference type="ProteomicsDB" id="68714">
    <molecule id="Q7KZI7-16"/>
</dbReference>
<dbReference type="ProteomicsDB" id="68715">
    <molecule id="Q7KZI7-2"/>
</dbReference>
<dbReference type="ProteomicsDB" id="68716">
    <molecule id="Q7KZI7-3"/>
</dbReference>
<dbReference type="ProteomicsDB" id="68717">
    <molecule id="Q7KZI7-4"/>
</dbReference>
<dbReference type="ProteomicsDB" id="68718">
    <molecule id="Q7KZI7-5"/>
</dbReference>
<dbReference type="ProteomicsDB" id="68719">
    <molecule id="Q7KZI7-6"/>
</dbReference>
<dbReference type="ProteomicsDB" id="68720">
    <molecule id="Q7KZI7-7"/>
</dbReference>
<dbReference type="ProteomicsDB" id="68721">
    <molecule id="Q7KZI7-8"/>
</dbReference>
<dbReference type="ProteomicsDB" id="68722">
    <molecule id="Q7KZI7-9"/>
</dbReference>
<dbReference type="Pumba" id="Q7KZI7"/>
<dbReference type="Antibodypedia" id="15193">
    <property type="antibodies" value="457 antibodies from 40 providers"/>
</dbReference>
<dbReference type="DNASU" id="2011"/>
<dbReference type="Ensembl" id="ENST00000350490.11">
    <molecule id="Q7KZI7-15"/>
    <property type="protein sequence ID" value="ENSP00000294247.9"/>
    <property type="gene ID" value="ENSG00000072518.23"/>
</dbReference>
<dbReference type="Ensembl" id="ENST00000361128.9">
    <molecule id="Q7KZI7-5"/>
    <property type="protein sequence ID" value="ENSP00000355091.5"/>
    <property type="gene ID" value="ENSG00000072518.23"/>
</dbReference>
<dbReference type="Ensembl" id="ENST00000402010.8">
    <molecule id="Q7KZI7-1"/>
    <property type="protein sequence ID" value="ENSP00000385751.2"/>
    <property type="gene ID" value="ENSG00000072518.23"/>
</dbReference>
<dbReference type="Ensembl" id="ENST00000408948.7">
    <molecule id="Q7KZI7-13"/>
    <property type="protein sequence ID" value="ENSP00000386128.3"/>
    <property type="gene ID" value="ENSG00000072518.23"/>
</dbReference>
<dbReference type="Ensembl" id="ENST00000508192.5">
    <molecule id="Q7KZI7-16"/>
    <property type="protein sequence ID" value="ENSP00000425765.1"/>
    <property type="gene ID" value="ENSG00000072518.23"/>
</dbReference>
<dbReference type="Ensembl" id="ENST00000509502.6">
    <molecule id="Q7KZI7-14"/>
    <property type="protein sequence ID" value="ENSP00000423974.2"/>
    <property type="gene ID" value="ENSG00000072518.23"/>
</dbReference>
<dbReference type="Ensembl" id="ENST00000513765.7">
    <molecule id="Q7KZI7-8"/>
    <property type="protein sequence ID" value="ENSP00000421075.3"/>
    <property type="gene ID" value="ENSG00000072518.23"/>
</dbReference>
<dbReference type="GeneID" id="2011"/>
<dbReference type="KEGG" id="hsa:2011"/>
<dbReference type="MANE-Select" id="ENST00000402010.8">
    <property type="protein sequence ID" value="ENSP00000385751.2"/>
    <property type="RefSeq nucleotide sequence ID" value="NM_001039469.3"/>
    <property type="RefSeq protein sequence ID" value="NP_001034558.2"/>
</dbReference>
<dbReference type="UCSC" id="uc001nxv.5">
    <molecule id="Q7KZI7-1"/>
    <property type="organism name" value="human"/>
</dbReference>
<dbReference type="AGR" id="HGNC:3332"/>
<dbReference type="CTD" id="2011"/>
<dbReference type="DisGeNET" id="2011"/>
<dbReference type="GeneCards" id="MARK2"/>
<dbReference type="HGNC" id="HGNC:3332">
    <property type="gene designation" value="MARK2"/>
</dbReference>
<dbReference type="HPA" id="ENSG00000072518">
    <property type="expression patterns" value="Low tissue specificity"/>
</dbReference>
<dbReference type="MalaCards" id="MARK2"/>
<dbReference type="MIM" id="600526">
    <property type="type" value="gene"/>
</dbReference>
<dbReference type="neXtProt" id="NX_Q7KZI7"/>
<dbReference type="OpenTargets" id="ENSG00000072518"/>
<dbReference type="PharmGKB" id="PA35047"/>
<dbReference type="VEuPathDB" id="HostDB:ENSG00000072518"/>
<dbReference type="eggNOG" id="KOG0586">
    <property type="taxonomic scope" value="Eukaryota"/>
</dbReference>
<dbReference type="GeneTree" id="ENSGT00940000155031"/>
<dbReference type="HOGENOM" id="CLU_000288_157_5_1"/>
<dbReference type="InParanoid" id="Q7KZI7"/>
<dbReference type="OMA" id="MSASMHP"/>
<dbReference type="OrthoDB" id="504170at2759"/>
<dbReference type="PAN-GO" id="Q7KZI7">
    <property type="GO annotations" value="5 GO annotations based on evolutionary models"/>
</dbReference>
<dbReference type="PhylomeDB" id="Q7KZI7"/>
<dbReference type="TreeFam" id="TF315213"/>
<dbReference type="PathwayCommons" id="Q7KZI7"/>
<dbReference type="SignaLink" id="Q7KZI7"/>
<dbReference type="SIGNOR" id="Q7KZI7"/>
<dbReference type="BioGRID-ORCS" id="2011">
    <property type="hits" value="146 hits in 1208 CRISPR screens"/>
</dbReference>
<dbReference type="CD-CODE" id="FB4E32DD">
    <property type="entry name" value="Presynaptic clusters and postsynaptic densities"/>
</dbReference>
<dbReference type="ChiTaRS" id="MARK2">
    <property type="organism name" value="human"/>
</dbReference>
<dbReference type="EvolutionaryTrace" id="Q7KZI7"/>
<dbReference type="GeneWiki" id="MARK2"/>
<dbReference type="GenomeRNAi" id="2011"/>
<dbReference type="Pharos" id="Q7KZI7">
    <property type="development level" value="Tchem"/>
</dbReference>
<dbReference type="PRO" id="PR:Q7KZI7"/>
<dbReference type="Proteomes" id="UP000005640">
    <property type="component" value="Chromosome 11"/>
</dbReference>
<dbReference type="RNAct" id="Q7KZI7">
    <property type="molecule type" value="protein"/>
</dbReference>
<dbReference type="Bgee" id="ENSG00000072518">
    <property type="expression patterns" value="Expressed in lower esophagus mucosa and 113 other cell types or tissues"/>
</dbReference>
<dbReference type="ExpressionAtlas" id="Q7KZI7">
    <property type="expression patterns" value="baseline and differential"/>
</dbReference>
<dbReference type="GO" id="GO:0005884">
    <property type="term" value="C:actin filament"/>
    <property type="evidence" value="ECO:0000314"/>
    <property type="project" value="UniProtKB"/>
</dbReference>
<dbReference type="GO" id="GO:0005737">
    <property type="term" value="C:cytoplasm"/>
    <property type="evidence" value="ECO:0000314"/>
    <property type="project" value="UniProtKB"/>
</dbReference>
<dbReference type="GO" id="GO:0030425">
    <property type="term" value="C:dendrite"/>
    <property type="evidence" value="ECO:0000314"/>
    <property type="project" value="UniProtKB"/>
</dbReference>
<dbReference type="GO" id="GO:0016328">
    <property type="term" value="C:lateral plasma membrane"/>
    <property type="evidence" value="ECO:0000314"/>
    <property type="project" value="UniProtKB"/>
</dbReference>
<dbReference type="GO" id="GO:0016020">
    <property type="term" value="C:membrane"/>
    <property type="evidence" value="ECO:0000315"/>
    <property type="project" value="UniProtKB"/>
</dbReference>
<dbReference type="GO" id="GO:0097427">
    <property type="term" value="C:microtubule bundle"/>
    <property type="evidence" value="ECO:0000314"/>
    <property type="project" value="UniProtKB"/>
</dbReference>
<dbReference type="GO" id="GO:0005739">
    <property type="term" value="C:mitochondrion"/>
    <property type="evidence" value="ECO:0000303"/>
    <property type="project" value="ParkinsonsUK-UCL"/>
</dbReference>
<dbReference type="GO" id="GO:0005654">
    <property type="term" value="C:nucleoplasm"/>
    <property type="evidence" value="ECO:0000314"/>
    <property type="project" value="HPA"/>
</dbReference>
<dbReference type="GO" id="GO:0005886">
    <property type="term" value="C:plasma membrane"/>
    <property type="evidence" value="ECO:0000314"/>
    <property type="project" value="HPA"/>
</dbReference>
<dbReference type="GO" id="GO:0005524">
    <property type="term" value="F:ATP binding"/>
    <property type="evidence" value="ECO:0000314"/>
    <property type="project" value="UniProtKB"/>
</dbReference>
<dbReference type="GO" id="GO:0045296">
    <property type="term" value="F:cadherin binding"/>
    <property type="evidence" value="ECO:0007005"/>
    <property type="project" value="BHF-UCL"/>
</dbReference>
<dbReference type="GO" id="GO:0008289">
    <property type="term" value="F:lipid binding"/>
    <property type="evidence" value="ECO:0007669"/>
    <property type="project" value="UniProtKB-KW"/>
</dbReference>
<dbReference type="GO" id="GO:0000287">
    <property type="term" value="F:magnesium ion binding"/>
    <property type="evidence" value="ECO:0000314"/>
    <property type="project" value="UniProtKB"/>
</dbReference>
<dbReference type="GO" id="GO:0030295">
    <property type="term" value="F:protein kinase activator activity"/>
    <property type="evidence" value="ECO:0000304"/>
    <property type="project" value="ParkinsonsUK-UCL"/>
</dbReference>
<dbReference type="GO" id="GO:0106310">
    <property type="term" value="F:protein serine kinase activity"/>
    <property type="evidence" value="ECO:0007669"/>
    <property type="project" value="RHEA"/>
</dbReference>
<dbReference type="GO" id="GO:0004674">
    <property type="term" value="F:protein serine/threonine kinase activity"/>
    <property type="evidence" value="ECO:0000314"/>
    <property type="project" value="UniProtKB"/>
</dbReference>
<dbReference type="GO" id="GO:0003723">
    <property type="term" value="F:RNA binding"/>
    <property type="evidence" value="ECO:0007005"/>
    <property type="project" value="UniProtKB"/>
</dbReference>
<dbReference type="GO" id="GO:0048156">
    <property type="term" value="F:tau protein binding"/>
    <property type="evidence" value="ECO:0000250"/>
    <property type="project" value="ARUK-UCL"/>
</dbReference>
<dbReference type="GO" id="GO:0050321">
    <property type="term" value="F:tau-protein kinase activity"/>
    <property type="evidence" value="ECO:0000315"/>
    <property type="project" value="UniProtKB"/>
</dbReference>
<dbReference type="GO" id="GO:0000422">
    <property type="term" value="P:autophagy of mitochondrion"/>
    <property type="evidence" value="ECO:0000303"/>
    <property type="project" value="ParkinsonsUK-UCL"/>
</dbReference>
<dbReference type="GO" id="GO:0061564">
    <property type="term" value="P:axon development"/>
    <property type="evidence" value="ECO:0000250"/>
    <property type="project" value="ARUK-UCL"/>
</dbReference>
<dbReference type="GO" id="GO:0030010">
    <property type="term" value="P:establishment of cell polarity"/>
    <property type="evidence" value="ECO:0000314"/>
    <property type="project" value="UniProtKB"/>
</dbReference>
<dbReference type="GO" id="GO:0071963">
    <property type="term" value="P:establishment or maintenance of cell polarity regulating cell shape"/>
    <property type="evidence" value="ECO:0000250"/>
    <property type="project" value="ARUK-UCL"/>
</dbReference>
<dbReference type="GO" id="GO:0045197">
    <property type="term" value="P:establishment or maintenance of epithelial cell apical/basal polarity"/>
    <property type="evidence" value="ECO:0000314"/>
    <property type="project" value="UniProtKB"/>
</dbReference>
<dbReference type="GO" id="GO:0035556">
    <property type="term" value="P:intracellular signal transduction"/>
    <property type="evidence" value="ECO:0000314"/>
    <property type="project" value="UniProtKB"/>
</dbReference>
<dbReference type="GO" id="GO:0000226">
    <property type="term" value="P:microtubule cytoskeleton organization"/>
    <property type="evidence" value="ECO:0000318"/>
    <property type="project" value="GO_Central"/>
</dbReference>
<dbReference type="GO" id="GO:0051646">
    <property type="term" value="P:mitochondrion localization"/>
    <property type="evidence" value="ECO:0000303"/>
    <property type="project" value="ParkinsonsUK-UCL"/>
</dbReference>
<dbReference type="GO" id="GO:0001764">
    <property type="term" value="P:neuron migration"/>
    <property type="evidence" value="ECO:0000250"/>
    <property type="project" value="UniProtKB"/>
</dbReference>
<dbReference type="GO" id="GO:0018105">
    <property type="term" value="P:peptidyl-serine phosphorylation"/>
    <property type="evidence" value="ECO:0000314"/>
    <property type="project" value="ARUK-UCL"/>
</dbReference>
<dbReference type="GO" id="GO:0010976">
    <property type="term" value="P:positive regulation of neuron projection development"/>
    <property type="evidence" value="ECO:0000314"/>
    <property type="project" value="UniProtKB"/>
</dbReference>
<dbReference type="GO" id="GO:0046777">
    <property type="term" value="P:protein autophosphorylation"/>
    <property type="evidence" value="ECO:0000250"/>
    <property type="project" value="UniProtKB"/>
</dbReference>
<dbReference type="GO" id="GO:0006468">
    <property type="term" value="P:protein phosphorylation"/>
    <property type="evidence" value="ECO:0000314"/>
    <property type="project" value="UniProtKB"/>
</dbReference>
<dbReference type="GO" id="GO:0050770">
    <property type="term" value="P:regulation of axonogenesis"/>
    <property type="evidence" value="ECO:0000315"/>
    <property type="project" value="UniProtKB"/>
</dbReference>
<dbReference type="GO" id="GO:0051493">
    <property type="term" value="P:regulation of cytoskeleton organization"/>
    <property type="evidence" value="ECO:0000250"/>
    <property type="project" value="UniProtKB"/>
</dbReference>
<dbReference type="GO" id="GO:0070507">
    <property type="term" value="P:regulation of microtubule cytoskeleton organization"/>
    <property type="evidence" value="ECO:0000314"/>
    <property type="project" value="ARUK-UCL"/>
</dbReference>
<dbReference type="GO" id="GO:1902996">
    <property type="term" value="P:regulation of neurofibrillary tangle assembly"/>
    <property type="evidence" value="ECO:0000250"/>
    <property type="project" value="ARUK-UCL"/>
</dbReference>
<dbReference type="GO" id="GO:0016055">
    <property type="term" value="P:Wnt signaling pathway"/>
    <property type="evidence" value="ECO:0007669"/>
    <property type="project" value="UniProtKB-KW"/>
</dbReference>
<dbReference type="CDD" id="cd12201">
    <property type="entry name" value="MARK2_C"/>
    <property type="match status" value="1"/>
</dbReference>
<dbReference type="CDD" id="cd14072">
    <property type="entry name" value="STKc_MARK"/>
    <property type="match status" value="1"/>
</dbReference>
<dbReference type="CDD" id="cd14406">
    <property type="entry name" value="UBA_MARK2"/>
    <property type="match status" value="1"/>
</dbReference>
<dbReference type="FunFam" id="1.10.510.10:FF:001032">
    <property type="entry name" value="KP78b, isoform A"/>
    <property type="match status" value="1"/>
</dbReference>
<dbReference type="FunFam" id="1.10.8.10:FF:000013">
    <property type="entry name" value="Non-specific serine/threonine protein kinase"/>
    <property type="match status" value="1"/>
</dbReference>
<dbReference type="FunFam" id="3.30.200.20:FF:000003">
    <property type="entry name" value="Non-specific serine/threonine protein kinase"/>
    <property type="match status" value="1"/>
</dbReference>
<dbReference type="FunFam" id="3.30.310.80:FF:000001">
    <property type="entry name" value="Non-specific serine/threonine protein kinase"/>
    <property type="match status" value="1"/>
</dbReference>
<dbReference type="Gene3D" id="1.10.8.10">
    <property type="entry name" value="DNA helicase RuvA subunit, C-terminal domain"/>
    <property type="match status" value="1"/>
</dbReference>
<dbReference type="Gene3D" id="3.30.310.80">
    <property type="entry name" value="Kinase associated domain 1, KA1"/>
    <property type="match status" value="1"/>
</dbReference>
<dbReference type="Gene3D" id="3.30.200.20">
    <property type="entry name" value="Phosphorylase Kinase, domain 1"/>
    <property type="match status" value="1"/>
</dbReference>
<dbReference type="Gene3D" id="1.10.510.10">
    <property type="entry name" value="Transferase(Phosphotransferase) domain 1"/>
    <property type="match status" value="1"/>
</dbReference>
<dbReference type="InterPro" id="IPR028375">
    <property type="entry name" value="KA1/Ssp2_C"/>
</dbReference>
<dbReference type="InterPro" id="IPR001772">
    <property type="entry name" value="KA1_dom"/>
</dbReference>
<dbReference type="InterPro" id="IPR011009">
    <property type="entry name" value="Kinase-like_dom_sf"/>
</dbReference>
<dbReference type="InterPro" id="IPR049508">
    <property type="entry name" value="MARK1-4_cat"/>
</dbReference>
<dbReference type="InterPro" id="IPR000719">
    <property type="entry name" value="Prot_kinase_dom"/>
</dbReference>
<dbReference type="InterPro" id="IPR017441">
    <property type="entry name" value="Protein_kinase_ATP_BS"/>
</dbReference>
<dbReference type="InterPro" id="IPR008271">
    <property type="entry name" value="Ser/Thr_kinase_AS"/>
</dbReference>
<dbReference type="InterPro" id="IPR015940">
    <property type="entry name" value="UBA"/>
</dbReference>
<dbReference type="PANTHER" id="PTHR24346">
    <property type="entry name" value="MAP/MICROTUBULE AFFINITY-REGULATING KINASE"/>
    <property type="match status" value="1"/>
</dbReference>
<dbReference type="PANTHER" id="PTHR24346:SF56">
    <property type="entry name" value="SERINE_THREONINE-PROTEIN KINASE MARK2"/>
    <property type="match status" value="1"/>
</dbReference>
<dbReference type="Pfam" id="PF02149">
    <property type="entry name" value="KA1"/>
    <property type="match status" value="1"/>
</dbReference>
<dbReference type="Pfam" id="PF00069">
    <property type="entry name" value="Pkinase"/>
    <property type="match status" value="1"/>
</dbReference>
<dbReference type="Pfam" id="PF00627">
    <property type="entry name" value="UBA"/>
    <property type="match status" value="1"/>
</dbReference>
<dbReference type="SMART" id="SM00220">
    <property type="entry name" value="S_TKc"/>
    <property type="match status" value="1"/>
</dbReference>
<dbReference type="SMART" id="SM00165">
    <property type="entry name" value="UBA"/>
    <property type="match status" value="1"/>
</dbReference>
<dbReference type="SUPFAM" id="SSF103243">
    <property type="entry name" value="KA1-like"/>
    <property type="match status" value="1"/>
</dbReference>
<dbReference type="SUPFAM" id="SSF56112">
    <property type="entry name" value="Protein kinase-like (PK-like)"/>
    <property type="match status" value="1"/>
</dbReference>
<dbReference type="PROSITE" id="PS50032">
    <property type="entry name" value="KA1"/>
    <property type="match status" value="1"/>
</dbReference>
<dbReference type="PROSITE" id="PS00107">
    <property type="entry name" value="PROTEIN_KINASE_ATP"/>
    <property type="match status" value="1"/>
</dbReference>
<dbReference type="PROSITE" id="PS50011">
    <property type="entry name" value="PROTEIN_KINASE_DOM"/>
    <property type="match status" value="1"/>
</dbReference>
<dbReference type="PROSITE" id="PS00108">
    <property type="entry name" value="PROTEIN_KINASE_ST"/>
    <property type="match status" value="1"/>
</dbReference>
<dbReference type="PROSITE" id="PS50030">
    <property type="entry name" value="UBA"/>
    <property type="match status" value="1"/>
</dbReference>
<feature type="chain" id="PRO_0000086301" description="Serine/threonine-protein kinase MARK2">
    <location>
        <begin position="1"/>
        <end position="788"/>
    </location>
</feature>
<feature type="domain" description="Protein kinase" evidence="5">
    <location>
        <begin position="53"/>
        <end position="304"/>
    </location>
</feature>
<feature type="domain" description="UBA" evidence="6">
    <location>
        <begin position="323"/>
        <end position="362"/>
    </location>
</feature>
<feature type="domain" description="KA1" evidence="7">
    <location>
        <begin position="739"/>
        <end position="788"/>
    </location>
</feature>
<feature type="region of interest" description="Disordered" evidence="9">
    <location>
        <begin position="1"/>
        <end position="46"/>
    </location>
</feature>
<feature type="region of interest" description="Disordered" evidence="9">
    <location>
        <begin position="373"/>
        <end position="632"/>
    </location>
</feature>
<feature type="compositionally biased region" description="Polar residues" evidence="9">
    <location>
        <begin position="27"/>
        <end position="45"/>
    </location>
</feature>
<feature type="compositionally biased region" description="Polar residues" evidence="9">
    <location>
        <begin position="418"/>
        <end position="432"/>
    </location>
</feature>
<feature type="compositionally biased region" description="Basic and acidic residues" evidence="9">
    <location>
        <begin position="433"/>
        <end position="445"/>
    </location>
</feature>
<feature type="compositionally biased region" description="Polar residues" evidence="9">
    <location>
        <begin position="467"/>
        <end position="486"/>
    </location>
</feature>
<feature type="compositionally biased region" description="Polar residues" evidence="9">
    <location>
        <begin position="495"/>
        <end position="504"/>
    </location>
</feature>
<feature type="compositionally biased region" description="Low complexity" evidence="9">
    <location>
        <begin position="511"/>
        <end position="525"/>
    </location>
</feature>
<feature type="active site" description="Proton acceptor" evidence="4 5 8">
    <location>
        <position position="175"/>
    </location>
</feature>
<feature type="binding site" evidence="4 5">
    <location>
        <begin position="59"/>
        <end position="67"/>
    </location>
    <ligand>
        <name>ATP</name>
        <dbReference type="ChEBI" id="CHEBI:30616"/>
    </ligand>
</feature>
<feature type="binding site" evidence="2 5">
    <location>
        <position position="82"/>
    </location>
    <ligand>
        <name>ATP</name>
        <dbReference type="ChEBI" id="CHEBI:30616"/>
    </ligand>
</feature>
<feature type="modified residue" description="Phosphoserine" evidence="47 48">
    <location>
        <position position="40"/>
    </location>
</feature>
<feature type="modified residue" description="Phosphothreonine; by autocatalysis" evidence="3">
    <location>
        <position position="58"/>
    </location>
</feature>
<feature type="modified residue" description="Phosphoserine; by CaMK1" evidence="3">
    <location>
        <position position="91"/>
    </location>
</feature>
<feature type="modified residue" description="Phosphoserine; by CaMK1" evidence="3">
    <location>
        <position position="92"/>
    </location>
</feature>
<feature type="modified residue" description="Phosphoserine; by CaMK1" evidence="3">
    <location>
        <position position="93"/>
    </location>
</feature>
<feature type="modified residue" description="Phosphothreonine; by LKB1 and TAOK1" evidence="12 46">
    <location>
        <position position="208"/>
    </location>
</feature>
<feature type="modified residue" description="Phosphoserine; by GSK3-beta" evidence="3">
    <location>
        <position position="212"/>
    </location>
</feature>
<feature type="modified residue" description="Phosphoserine; by autocatalysis" evidence="3">
    <location>
        <position position="274"/>
    </location>
</feature>
<feature type="modified residue" description="Phosphothreonine; by autocatalysis" evidence="3">
    <location>
        <position position="275"/>
    </location>
</feature>
<feature type="modified residue" description="Phosphothreonine; by CaMK1" evidence="3">
    <location>
        <position position="294"/>
    </location>
</feature>
<feature type="modified residue" description="Phosphoserine" evidence="45 46">
    <location>
        <position position="409"/>
    </location>
</feature>
<feature type="modified residue" description="Phosphoserine" evidence="40 42 43 45 46 48">
    <location>
        <position position="456"/>
    </location>
</feature>
<feature type="modified residue" description="Phosphothreonine" evidence="48">
    <location>
        <position position="467"/>
    </location>
</feature>
<feature type="modified residue" description="Phosphoserine" evidence="41 43 45 46 47 48">
    <location>
        <position position="486"/>
    </location>
</feature>
<feature type="modified residue" description="Phosphoserine" evidence="45">
    <location>
        <position position="493"/>
    </location>
</feature>
<feature type="modified residue" description="Phosphoserine" evidence="44 48">
    <location>
        <position position="569"/>
    </location>
</feature>
<feature type="modified residue" description="Phosphoserine" evidence="48">
    <location>
        <position position="571"/>
    </location>
</feature>
<feature type="modified residue" description="Phosphoserine" evidence="48">
    <location>
        <position position="592"/>
    </location>
</feature>
<feature type="modified residue" description="Phosphothreonine; by PKC/PRKCZ" evidence="13 15 48">
    <location>
        <position position="596"/>
    </location>
</feature>
<feature type="modified residue" description="Phosphoserine" evidence="47 48">
    <location>
        <position position="619"/>
    </location>
</feature>
<feature type="modified residue" description="Phosphoserine" evidence="46">
    <location>
        <position position="722"/>
    </location>
</feature>
<feature type="splice variant" id="VSP_051705" description="In isoform 2, isoform 3, isoform 6, isoform 7, isoform 10, isoform 12, isoform 13 and isoform 14." evidence="30 32">
    <location>
        <begin position="1"/>
        <end position="33"/>
    </location>
</feature>
<feature type="splice variant" id="VSP_039872" description="In isoform 13, isoform 14, isoform 15 and isoform 16." evidence="33">
    <location>
        <position position="412"/>
    </location>
</feature>
<feature type="splice variant" id="VSP_051706" description="In isoform 2, isoform 4, isoform 5, isoform 7, isoform 9, isoform 10, isoform 13, isoform 15 and isoform 16." evidence="28 29 30 31">
    <location>
        <begin position="505"/>
        <end position="558"/>
    </location>
</feature>
<feature type="splice variant" id="VSP_051707" description="In isoform 3, isoform 4, isoform 7, isoform 8, isoform 13, isoform 14 and isoform 16." evidence="28 29 30">
    <location>
        <begin position="644"/>
        <end position="652"/>
    </location>
</feature>
<feature type="splice variant" id="VSP_041853" description="In isoform 15." evidence="33">
    <location>
        <begin position="645"/>
        <end position="668"/>
    </location>
</feature>
<feature type="splice variant" id="VSP_051708" description="In isoform 5, isoform 11, isoform 10 and isoform 12." evidence="28 30 31">
    <location>
        <begin position="654"/>
        <end position="668"/>
    </location>
</feature>
<feature type="mutagenesis site" description="Prevents phosphorylation and activation by STK11/LKB1 complex." evidence="12">
    <original>T</original>
    <variation>A</variation>
    <location>
        <position position="208"/>
    </location>
</feature>
<feature type="mutagenesis site" description="Loss of membrane dissociation and binding to YWHAZ." evidence="13 15">
    <original>T</original>
    <variation>A</variation>
    <location>
        <position position="596"/>
    </location>
</feature>
<feature type="sequence conflict" description="In Ref. 7; CAA80914." evidence="33" ref="7">
    <original>A</original>
    <variation>G</variation>
    <location>
        <position position="192"/>
    </location>
</feature>
<feature type="sequence conflict" description="In Ref. 7; CAA80914." evidence="33" ref="7">
    <original>L</original>
    <variation>C</variation>
    <location>
        <position position="236"/>
    </location>
</feature>
<feature type="sequence conflict" description="In Ref. 1; CAA66229." evidence="33" ref="1">
    <original>PS</original>
    <variation>QF</variation>
    <location>
        <begin position="389"/>
        <end position="390"/>
    </location>
</feature>
<feature type="strand" evidence="49">
    <location>
        <begin position="53"/>
        <end position="60"/>
    </location>
</feature>
<feature type="strand" evidence="49">
    <location>
        <begin position="63"/>
        <end position="72"/>
    </location>
</feature>
<feature type="turn" evidence="49">
    <location>
        <begin position="73"/>
        <end position="75"/>
    </location>
</feature>
<feature type="strand" evidence="49">
    <location>
        <begin position="78"/>
        <end position="85"/>
    </location>
</feature>
<feature type="helix" evidence="49">
    <location>
        <begin position="86"/>
        <end position="88"/>
    </location>
</feature>
<feature type="helix" evidence="49">
    <location>
        <begin position="93"/>
        <end position="106"/>
    </location>
</feature>
<feature type="strand" evidence="49">
    <location>
        <begin position="115"/>
        <end position="120"/>
    </location>
</feature>
<feature type="strand" evidence="49">
    <location>
        <begin position="122"/>
        <end position="130"/>
    </location>
</feature>
<feature type="helix" evidence="49">
    <location>
        <begin position="137"/>
        <end position="144"/>
    </location>
</feature>
<feature type="helix" evidence="49">
    <location>
        <begin position="149"/>
        <end position="168"/>
    </location>
</feature>
<feature type="helix" evidence="49">
    <location>
        <begin position="178"/>
        <end position="180"/>
    </location>
</feature>
<feature type="strand" evidence="49">
    <location>
        <begin position="181"/>
        <end position="183"/>
    </location>
</feature>
<feature type="strand" evidence="49">
    <location>
        <begin position="189"/>
        <end position="191"/>
    </location>
</feature>
<feature type="helix" evidence="49">
    <location>
        <begin position="213"/>
        <end position="215"/>
    </location>
</feature>
<feature type="helix" evidence="49">
    <location>
        <begin position="218"/>
        <end position="222"/>
    </location>
</feature>
<feature type="helix" evidence="49">
    <location>
        <begin position="230"/>
        <end position="245"/>
    </location>
</feature>
<feature type="helix" evidence="49">
    <location>
        <begin position="255"/>
        <end position="264"/>
    </location>
</feature>
<feature type="helix" evidence="49">
    <location>
        <begin position="275"/>
        <end position="284"/>
    </location>
</feature>
<feature type="helix" evidence="49">
    <location>
        <begin position="289"/>
        <end position="291"/>
    </location>
</feature>
<feature type="helix" evidence="49">
    <location>
        <begin position="295"/>
        <end position="298"/>
    </location>
</feature>
<feature type="helix" evidence="49">
    <location>
        <begin position="303"/>
        <end position="305"/>
    </location>
</feature>
<feature type="strand" evidence="49">
    <location>
        <begin position="309"/>
        <end position="311"/>
    </location>
</feature>
<feature type="helix" evidence="49">
    <location>
        <begin position="326"/>
        <end position="335"/>
    </location>
</feature>
<feature type="helix" evidence="49">
    <location>
        <begin position="339"/>
        <end position="347"/>
    </location>
</feature>
<feature type="helix" evidence="49">
    <location>
        <begin position="353"/>
        <end position="360"/>
    </location>
</feature>
<feature type="modified residue" description="Phosphoserine" evidence="44 46">
    <location sequence="Q7KZI7-13">
        <position position="376"/>
    </location>
</feature>
<feature type="modified residue" description="Phosphoserine" evidence="44 46">
    <location sequence="Q7KZI7-14">
        <position position="376"/>
    </location>
</feature>
<feature type="modified residue" description="Phosphoserine" evidence="44 46">
    <location sequence="Q7KZI7-15">
        <position position="409"/>
    </location>
</feature>
<feature type="modified residue" description="Phosphoserine" evidence="44 46">
    <location sequence="Q7KZI7-16">
        <position position="409"/>
    </location>
</feature>